<feature type="chain" id="PRO_0000129986" description="Small ribosomal subunit protein uS19c">
    <location>
        <begin position="1"/>
        <end position="92"/>
    </location>
</feature>
<evidence type="ECO:0000250" key="1"/>
<evidence type="ECO:0000305" key="2"/>
<gene>
    <name type="primary">rps19</name>
</gene>
<organism>
    <name type="scientific">Porphyra purpurea</name>
    <name type="common">Red seaweed</name>
    <name type="synonym">Ulva purpurea</name>
    <dbReference type="NCBI Taxonomy" id="2787"/>
    <lineage>
        <taxon>Eukaryota</taxon>
        <taxon>Rhodophyta</taxon>
        <taxon>Bangiophyceae</taxon>
        <taxon>Bangiales</taxon>
        <taxon>Bangiaceae</taxon>
        <taxon>Porphyra</taxon>
    </lineage>
</organism>
<reference key="1">
    <citation type="journal article" date="1995" name="Plant Mol. Biol. Rep.">
        <title>Complete nucleotide sequence of the Porphyra purpurea chloroplast genome.</title>
        <authorList>
            <person name="Reith M.E."/>
            <person name="Munholland J."/>
        </authorList>
    </citation>
    <scope>NUCLEOTIDE SEQUENCE [LARGE SCALE GENOMIC DNA]</scope>
    <source>
        <strain>Avonport</strain>
    </source>
</reference>
<protein>
    <recommendedName>
        <fullName evidence="2">Small ribosomal subunit protein uS19c</fullName>
    </recommendedName>
    <alternativeName>
        <fullName>30S ribosomal protein S19, chloroplastic</fullName>
    </alternativeName>
</protein>
<name>RR19_PORPU</name>
<keyword id="KW-0150">Chloroplast</keyword>
<keyword id="KW-0934">Plastid</keyword>
<keyword id="KW-0687">Ribonucleoprotein</keyword>
<keyword id="KW-0689">Ribosomal protein</keyword>
<keyword id="KW-0694">RNA-binding</keyword>
<keyword id="KW-0699">rRNA-binding</keyword>
<accession>P51310</accession>
<dbReference type="EMBL" id="U38804">
    <property type="protein sequence ID" value="AAC08196.1"/>
    <property type="molecule type" value="Genomic_DNA"/>
</dbReference>
<dbReference type="PIR" id="S73231">
    <property type="entry name" value="S73231"/>
</dbReference>
<dbReference type="RefSeq" id="NP_053920.1">
    <property type="nucleotide sequence ID" value="NC_000925.1"/>
</dbReference>
<dbReference type="SMR" id="P51310"/>
<dbReference type="GeneID" id="809939"/>
<dbReference type="GO" id="GO:0009507">
    <property type="term" value="C:chloroplast"/>
    <property type="evidence" value="ECO:0007669"/>
    <property type="project" value="UniProtKB-SubCell"/>
</dbReference>
<dbReference type="GO" id="GO:0005763">
    <property type="term" value="C:mitochondrial small ribosomal subunit"/>
    <property type="evidence" value="ECO:0007669"/>
    <property type="project" value="TreeGrafter"/>
</dbReference>
<dbReference type="GO" id="GO:0019843">
    <property type="term" value="F:rRNA binding"/>
    <property type="evidence" value="ECO:0007669"/>
    <property type="project" value="UniProtKB-UniRule"/>
</dbReference>
<dbReference type="GO" id="GO:0003735">
    <property type="term" value="F:structural constituent of ribosome"/>
    <property type="evidence" value="ECO:0007669"/>
    <property type="project" value="InterPro"/>
</dbReference>
<dbReference type="GO" id="GO:0000028">
    <property type="term" value="P:ribosomal small subunit assembly"/>
    <property type="evidence" value="ECO:0007669"/>
    <property type="project" value="TreeGrafter"/>
</dbReference>
<dbReference type="GO" id="GO:0006412">
    <property type="term" value="P:translation"/>
    <property type="evidence" value="ECO:0007669"/>
    <property type="project" value="UniProtKB-UniRule"/>
</dbReference>
<dbReference type="FunFam" id="3.30.860.10:FF:000001">
    <property type="entry name" value="30S ribosomal protein S19"/>
    <property type="match status" value="1"/>
</dbReference>
<dbReference type="Gene3D" id="3.30.860.10">
    <property type="entry name" value="30s Ribosomal Protein S19, Chain A"/>
    <property type="match status" value="1"/>
</dbReference>
<dbReference type="HAMAP" id="MF_00531">
    <property type="entry name" value="Ribosomal_uS19"/>
    <property type="match status" value="1"/>
</dbReference>
<dbReference type="InterPro" id="IPR002222">
    <property type="entry name" value="Ribosomal_uS19"/>
</dbReference>
<dbReference type="InterPro" id="IPR005732">
    <property type="entry name" value="Ribosomal_uS19_bac-type"/>
</dbReference>
<dbReference type="InterPro" id="IPR020934">
    <property type="entry name" value="Ribosomal_uS19_CS"/>
</dbReference>
<dbReference type="InterPro" id="IPR023575">
    <property type="entry name" value="Ribosomal_uS19_SF"/>
</dbReference>
<dbReference type="NCBIfam" id="TIGR01050">
    <property type="entry name" value="rpsS_bact"/>
    <property type="match status" value="1"/>
</dbReference>
<dbReference type="PANTHER" id="PTHR11880">
    <property type="entry name" value="RIBOSOMAL PROTEIN S19P FAMILY MEMBER"/>
    <property type="match status" value="1"/>
</dbReference>
<dbReference type="PANTHER" id="PTHR11880:SF8">
    <property type="entry name" value="SMALL RIBOSOMAL SUBUNIT PROTEIN US19M"/>
    <property type="match status" value="1"/>
</dbReference>
<dbReference type="Pfam" id="PF00203">
    <property type="entry name" value="Ribosomal_S19"/>
    <property type="match status" value="1"/>
</dbReference>
<dbReference type="PIRSF" id="PIRSF002144">
    <property type="entry name" value="Ribosomal_S19"/>
    <property type="match status" value="1"/>
</dbReference>
<dbReference type="PRINTS" id="PR00975">
    <property type="entry name" value="RIBOSOMALS19"/>
</dbReference>
<dbReference type="SUPFAM" id="SSF54570">
    <property type="entry name" value="Ribosomal protein S19"/>
    <property type="match status" value="1"/>
</dbReference>
<dbReference type="PROSITE" id="PS00323">
    <property type="entry name" value="RIBOSOMAL_S19"/>
    <property type="match status" value="1"/>
</dbReference>
<comment type="function">
    <text evidence="1">Protein S19 forms a complex with S13 that binds strongly to the 16S ribosomal RNA.</text>
</comment>
<comment type="subcellular location">
    <subcellularLocation>
        <location>Plastid</location>
        <location>Chloroplast</location>
    </subcellularLocation>
</comment>
<comment type="similarity">
    <text evidence="2">Belongs to the universal ribosomal protein uS19 family.</text>
</comment>
<proteinExistence type="inferred from homology"/>
<sequence length="92" mass="10431">MSRSIHKGPFIDVSLLTRIEALNTSGKKEVIKTWSRASTIIPDMIGHTIAVYNGKQHFPVFVSDQMVGHKLGEFVPTRTFRTHVKGDRKARR</sequence>
<geneLocation type="chloroplast"/>